<proteinExistence type="evidence at transcript level"/>
<organism>
    <name type="scientific">Arabidopsis thaliana</name>
    <name type="common">Mouse-ear cress</name>
    <dbReference type="NCBI Taxonomy" id="3702"/>
    <lineage>
        <taxon>Eukaryota</taxon>
        <taxon>Viridiplantae</taxon>
        <taxon>Streptophyta</taxon>
        <taxon>Embryophyta</taxon>
        <taxon>Tracheophyta</taxon>
        <taxon>Spermatophyta</taxon>
        <taxon>Magnoliopsida</taxon>
        <taxon>eudicotyledons</taxon>
        <taxon>Gunneridae</taxon>
        <taxon>Pentapetalae</taxon>
        <taxon>rosids</taxon>
        <taxon>malvids</taxon>
        <taxon>Brassicales</taxon>
        <taxon>Brassicaceae</taxon>
        <taxon>Camelineae</taxon>
        <taxon>Arabidopsis</taxon>
    </lineage>
</organism>
<gene>
    <name type="ordered locus">At1g28695</name>
    <name type="ORF">F1K23.29</name>
</gene>
<evidence type="ECO:0000255" key="1"/>
<evidence type="ECO:0000305" key="2"/>
<name>Y1869_ARATH</name>
<comment type="sequence caution" evidence="2">
    <conflict type="erroneous gene model prediction">
        <sequence resource="EMBL-CDS" id="AAF24543"/>
    </conflict>
    <text>The predicted gene has been split into 2 genes: At1g28690 and At1g28695.</text>
</comment>
<reference key="1">
    <citation type="journal article" date="2000" name="Nature">
        <title>Sequence and analysis of chromosome 1 of the plant Arabidopsis thaliana.</title>
        <authorList>
            <person name="Theologis A."/>
            <person name="Ecker J.R."/>
            <person name="Palm C.J."/>
            <person name="Federspiel N.A."/>
            <person name="Kaul S."/>
            <person name="White O."/>
            <person name="Alonso J."/>
            <person name="Altafi H."/>
            <person name="Araujo R."/>
            <person name="Bowman C.L."/>
            <person name="Brooks S.Y."/>
            <person name="Buehler E."/>
            <person name="Chan A."/>
            <person name="Chao Q."/>
            <person name="Chen H."/>
            <person name="Cheuk R.F."/>
            <person name="Chin C.W."/>
            <person name="Chung M.K."/>
            <person name="Conn L."/>
            <person name="Conway A.B."/>
            <person name="Conway A.R."/>
            <person name="Creasy T.H."/>
            <person name="Dewar K."/>
            <person name="Dunn P."/>
            <person name="Etgu P."/>
            <person name="Feldblyum T.V."/>
            <person name="Feng J.-D."/>
            <person name="Fong B."/>
            <person name="Fujii C.Y."/>
            <person name="Gill J.E."/>
            <person name="Goldsmith A.D."/>
            <person name="Haas B."/>
            <person name="Hansen N.F."/>
            <person name="Hughes B."/>
            <person name="Huizar L."/>
            <person name="Hunter J.L."/>
            <person name="Jenkins J."/>
            <person name="Johnson-Hopson C."/>
            <person name="Khan S."/>
            <person name="Khaykin E."/>
            <person name="Kim C.J."/>
            <person name="Koo H.L."/>
            <person name="Kremenetskaia I."/>
            <person name="Kurtz D.B."/>
            <person name="Kwan A."/>
            <person name="Lam B."/>
            <person name="Langin-Hooper S."/>
            <person name="Lee A."/>
            <person name="Lee J.M."/>
            <person name="Lenz C.A."/>
            <person name="Li J.H."/>
            <person name="Li Y.-P."/>
            <person name="Lin X."/>
            <person name="Liu S.X."/>
            <person name="Liu Z.A."/>
            <person name="Luros J.S."/>
            <person name="Maiti R."/>
            <person name="Marziali A."/>
            <person name="Militscher J."/>
            <person name="Miranda M."/>
            <person name="Nguyen M."/>
            <person name="Nierman W.C."/>
            <person name="Osborne B.I."/>
            <person name="Pai G."/>
            <person name="Peterson J."/>
            <person name="Pham P.K."/>
            <person name="Rizzo M."/>
            <person name="Rooney T."/>
            <person name="Rowley D."/>
            <person name="Sakano H."/>
            <person name="Salzberg S.L."/>
            <person name="Schwartz J.R."/>
            <person name="Shinn P."/>
            <person name="Southwick A.M."/>
            <person name="Sun H."/>
            <person name="Tallon L.J."/>
            <person name="Tambunga G."/>
            <person name="Toriumi M.J."/>
            <person name="Town C.D."/>
            <person name="Utterback T."/>
            <person name="Van Aken S."/>
            <person name="Vaysberg M."/>
            <person name="Vysotskaia V.S."/>
            <person name="Walker M."/>
            <person name="Wu D."/>
            <person name="Yu G."/>
            <person name="Fraser C.M."/>
            <person name="Venter J.C."/>
            <person name="Davis R.W."/>
        </authorList>
    </citation>
    <scope>NUCLEOTIDE SEQUENCE [LARGE SCALE GENOMIC DNA]</scope>
    <source>
        <strain>cv. Columbia</strain>
    </source>
</reference>
<reference key="2">
    <citation type="journal article" date="2017" name="Plant J.">
        <title>Araport11: a complete reannotation of the Arabidopsis thaliana reference genome.</title>
        <authorList>
            <person name="Cheng C.Y."/>
            <person name="Krishnakumar V."/>
            <person name="Chan A.P."/>
            <person name="Thibaud-Nissen F."/>
            <person name="Schobel S."/>
            <person name="Town C.D."/>
        </authorList>
    </citation>
    <scope>GENOME REANNOTATION</scope>
    <source>
        <strain>cv. Columbia</strain>
    </source>
</reference>
<keyword id="KW-1185">Reference proteome</keyword>
<keyword id="KW-0732">Signal</keyword>
<sequence length="329" mass="37917">MPLCNNFSGNLVVAVALFFAGALYIFNYQNYVNTLRTTQYPVDELEAALYTAAAGNNKTVIITMVNKAYVKEVGRGSTMLDLFLESFWEGEGTLPLLDHLMVVAVDQTAYDRCRFKRLHCYKMETEDGVDLEGEKVFMSKDFIEMMWRRTRLILDVLRRGYNVIFTDTDVMWLRSPLSRLNMSLDMQISVDRINVGGQLINTGFYHVRSNNKTISLFQKWYDMRLNSTGMKEQDVLKNLLDSGFFNQLGLNVGFLSTTEFSGFCQDSPHMGVVTTVHANCCLHIPAKVFDLTRVLRDWKRYKASHVNSKWSPHLKCSRSWNDTHYIPRL</sequence>
<accession>Q3E6Y3</accession>
<accession>Q9SHQ3</accession>
<feature type="signal peptide" evidence="1">
    <location>
        <begin position="1"/>
        <end position="22"/>
    </location>
</feature>
<feature type="chain" id="PRO_0000342738" description="Uncharacterized protein At1g28695">
    <location>
        <begin position="23"/>
        <end position="329"/>
    </location>
</feature>
<protein>
    <recommendedName>
        <fullName>Uncharacterized protein At1g28695</fullName>
    </recommendedName>
</protein>
<dbReference type="EMBL" id="AC007508">
    <property type="protein sequence ID" value="AAF24543.1"/>
    <property type="status" value="ALT_SEQ"/>
    <property type="molecule type" value="Genomic_DNA"/>
</dbReference>
<dbReference type="EMBL" id="CP002684">
    <property type="protein sequence ID" value="AEE31015.1"/>
    <property type="molecule type" value="Genomic_DNA"/>
</dbReference>
<dbReference type="RefSeq" id="NP_973933.1">
    <property type="nucleotide sequence ID" value="NM_202204.3"/>
</dbReference>
<dbReference type="BioGRID" id="30373">
    <property type="interactions" value="1"/>
</dbReference>
<dbReference type="CAZy" id="GT77">
    <property type="family name" value="Glycosyltransferase Family 77"/>
</dbReference>
<dbReference type="iPTMnet" id="Q3E6Y3"/>
<dbReference type="PaxDb" id="3702-AT1G28695.1"/>
<dbReference type="ProteomicsDB" id="232386"/>
<dbReference type="EnsemblPlants" id="AT1G28695.1">
    <property type="protein sequence ID" value="AT1G28695.1"/>
    <property type="gene ID" value="AT1G28695"/>
</dbReference>
<dbReference type="GeneID" id="2745765"/>
<dbReference type="Gramene" id="AT1G28695.1">
    <property type="protein sequence ID" value="AT1G28695.1"/>
    <property type="gene ID" value="AT1G28695"/>
</dbReference>
<dbReference type="KEGG" id="ath:AT1G28695"/>
<dbReference type="Araport" id="AT1G28695"/>
<dbReference type="TAIR" id="AT1G28695"/>
<dbReference type="eggNOG" id="ENOG502QS67">
    <property type="taxonomic scope" value="Eukaryota"/>
</dbReference>
<dbReference type="HOGENOM" id="CLU_034507_1_0_1"/>
<dbReference type="InParanoid" id="Q3E6Y3"/>
<dbReference type="OMA" id="ICEDSRD"/>
<dbReference type="PhylomeDB" id="Q3E6Y3"/>
<dbReference type="PRO" id="PR:Q3E6Y3"/>
<dbReference type="Proteomes" id="UP000006548">
    <property type="component" value="Chromosome 1"/>
</dbReference>
<dbReference type="ExpressionAtlas" id="Q3E6Y3">
    <property type="expression patterns" value="baseline and differential"/>
</dbReference>
<dbReference type="InterPro" id="IPR044821">
    <property type="entry name" value="At1g28695/At4g15970-like"/>
</dbReference>
<dbReference type="InterPro" id="IPR005069">
    <property type="entry name" value="Nucl-diP-sugar_transferase"/>
</dbReference>
<dbReference type="PANTHER" id="PTHR46038">
    <property type="entry name" value="EXPRESSED PROTEIN-RELATED"/>
    <property type="match status" value="1"/>
</dbReference>
<dbReference type="PANTHER" id="PTHR46038:SF12">
    <property type="entry name" value="OS03G0731800 PROTEIN"/>
    <property type="match status" value="1"/>
</dbReference>
<dbReference type="Pfam" id="PF03407">
    <property type="entry name" value="Nucleotid_trans"/>
    <property type="match status" value="1"/>
</dbReference>